<protein>
    <recommendedName>
        <fullName>Probable folate-biopterin transporter 5</fullName>
    </recommendedName>
</protein>
<feature type="chain" id="PRO_0000420117" description="Probable folate-biopterin transporter 5">
    <location>
        <begin position="1"/>
        <end position="492"/>
    </location>
</feature>
<feature type="transmembrane region" description="Helical" evidence="2">
    <location>
        <begin position="46"/>
        <end position="66"/>
    </location>
</feature>
<feature type="transmembrane region" description="Helical" evidence="2">
    <location>
        <begin position="92"/>
        <end position="112"/>
    </location>
</feature>
<feature type="transmembrane region" description="Helical" evidence="2">
    <location>
        <begin position="117"/>
        <end position="137"/>
    </location>
</feature>
<feature type="transmembrane region" description="Helical" evidence="2">
    <location>
        <begin position="142"/>
        <end position="162"/>
    </location>
</feature>
<feature type="transmembrane region" description="Helical" evidence="2">
    <location>
        <begin position="186"/>
        <end position="206"/>
    </location>
</feature>
<feature type="transmembrane region" description="Helical" evidence="2">
    <location>
        <begin position="210"/>
        <end position="230"/>
    </location>
</feature>
<feature type="transmembrane region" description="Helical" evidence="2">
    <location>
        <begin position="264"/>
        <end position="285"/>
    </location>
</feature>
<feature type="transmembrane region" description="Helical" evidence="2">
    <location>
        <begin position="298"/>
        <end position="318"/>
    </location>
</feature>
<feature type="transmembrane region" description="Helical" evidence="2">
    <location>
        <begin position="328"/>
        <end position="348"/>
    </location>
</feature>
<feature type="transmembrane region" description="Helical" evidence="2">
    <location>
        <begin position="361"/>
        <end position="381"/>
    </location>
</feature>
<feature type="transmembrane region" description="Helical" evidence="2">
    <location>
        <begin position="396"/>
        <end position="416"/>
    </location>
</feature>
<feature type="transmembrane region" description="Helical" evidence="2">
    <location>
        <begin position="433"/>
        <end position="453"/>
    </location>
</feature>
<feature type="splice variant" id="VSP_044406" description="In isoform 2." evidence="3">
    <original>VTRTEFGNLWL</original>
    <variation>EIRTRSSSRLR</variation>
    <location>
        <begin position="424"/>
        <end position="434"/>
    </location>
</feature>
<feature type="splice variant" id="VSP_044407" description="In isoform 2." evidence="3">
    <location>
        <begin position="435"/>
        <end position="492"/>
    </location>
</feature>
<feature type="sequence conflict" description="In Ref. 3; BAD44281." evidence="4" ref="3">
    <original>R</original>
    <variation>G</variation>
    <location>
        <position position="19"/>
    </location>
</feature>
<evidence type="ECO:0000250" key="1"/>
<evidence type="ECO:0000255" key="2"/>
<evidence type="ECO:0000303" key="3">
    <source ref="3"/>
</evidence>
<evidence type="ECO:0000305" key="4"/>
<comment type="function">
    <text evidence="1">Could mediate folate transport.</text>
</comment>
<comment type="subcellular location">
    <subcellularLocation>
        <location evidence="4">Membrane</location>
        <topology evidence="4">Multi-pass membrane protein</topology>
    </subcellularLocation>
</comment>
<comment type="alternative products">
    <event type="alternative splicing"/>
    <isoform>
        <id>F4KIL8-1</id>
        <name>1</name>
        <sequence type="displayed"/>
    </isoform>
    <isoform>
        <id>F4KIL8-2</id>
        <name>2</name>
        <sequence type="described" ref="VSP_044406 VSP_044407"/>
    </isoform>
</comment>
<comment type="similarity">
    <text evidence="4">Belongs to the major facilitator superfamily. Folate-biopterin transporter (TC 2.A.71) family.</text>
</comment>
<comment type="sequence caution" evidence="4">
    <conflict type="erroneous gene model prediction">
        <sequence resource="EMBL-CDS" id="AED93392"/>
    </conflict>
</comment>
<name>FBT5_ARATH</name>
<keyword id="KW-0025">Alternative splicing</keyword>
<keyword id="KW-0472">Membrane</keyword>
<keyword id="KW-1185">Reference proteome</keyword>
<keyword id="KW-0812">Transmembrane</keyword>
<keyword id="KW-1133">Transmembrane helix</keyword>
<keyword id="KW-0813">Transport</keyword>
<dbReference type="EMBL" id="AC005964">
    <property type="status" value="NOT_ANNOTATED_CDS"/>
    <property type="molecule type" value="Genomic_DNA"/>
</dbReference>
<dbReference type="EMBL" id="CP002688">
    <property type="protein sequence ID" value="AED93392.1"/>
    <property type="status" value="ALT_SEQ"/>
    <property type="molecule type" value="Genomic_DNA"/>
</dbReference>
<dbReference type="EMBL" id="CP002688">
    <property type="protein sequence ID" value="ANM69429.1"/>
    <property type="molecule type" value="Genomic_DNA"/>
</dbReference>
<dbReference type="EMBL" id="AK176518">
    <property type="protein sequence ID" value="BAD44281.1"/>
    <property type="molecule type" value="mRNA"/>
</dbReference>
<dbReference type="RefSeq" id="NP_001190390.1">
    <property type="nucleotide sequence ID" value="NM_001203461.1"/>
</dbReference>
<dbReference type="RefSeq" id="NP_001331109.1">
    <molecule id="F4KIL8-1"/>
    <property type="nucleotide sequence ID" value="NM_001343908.1"/>
</dbReference>
<dbReference type="SMR" id="F4KIL8"/>
<dbReference type="FunCoup" id="F4KIL8">
    <property type="interactions" value="248"/>
</dbReference>
<dbReference type="iPTMnet" id="F4KIL8"/>
<dbReference type="PaxDb" id="3702-AT5G25040.2"/>
<dbReference type="ProteomicsDB" id="222580">
    <molecule id="F4KIL8-1"/>
</dbReference>
<dbReference type="EnsemblPlants" id="AT5G25040.4">
    <molecule id="F4KIL8-1"/>
    <property type="protein sequence ID" value="AT5G25040.4"/>
    <property type="gene ID" value="AT5G25040"/>
</dbReference>
<dbReference type="GeneID" id="832574"/>
<dbReference type="Gramene" id="AT5G25040.4">
    <molecule id="F4KIL8-1"/>
    <property type="protein sequence ID" value="AT5G25040.4"/>
    <property type="gene ID" value="AT5G25040"/>
</dbReference>
<dbReference type="KEGG" id="ath:AT5G25040"/>
<dbReference type="Araport" id="AT5G25040"/>
<dbReference type="TAIR" id="AT5G25040"/>
<dbReference type="eggNOG" id="ENOG502QPUV">
    <property type="taxonomic scope" value="Eukaryota"/>
</dbReference>
<dbReference type="HOGENOM" id="CLU_018563_3_2_1"/>
<dbReference type="InParanoid" id="F4KIL8"/>
<dbReference type="OMA" id="SSIGMCV"/>
<dbReference type="PRO" id="PR:F4KIL8"/>
<dbReference type="Proteomes" id="UP000006548">
    <property type="component" value="Chromosome 5"/>
</dbReference>
<dbReference type="ExpressionAtlas" id="F4KIL8">
    <property type="expression patterns" value="baseline and differential"/>
</dbReference>
<dbReference type="GO" id="GO:0016020">
    <property type="term" value="C:membrane"/>
    <property type="evidence" value="ECO:0007669"/>
    <property type="project" value="UniProtKB-SubCell"/>
</dbReference>
<dbReference type="GO" id="GO:0009536">
    <property type="term" value="C:plastid"/>
    <property type="evidence" value="ECO:0007005"/>
    <property type="project" value="TAIR"/>
</dbReference>
<dbReference type="CDD" id="cd17484">
    <property type="entry name" value="MFS_FBT"/>
    <property type="match status" value="1"/>
</dbReference>
<dbReference type="Gene3D" id="1.20.1250.20">
    <property type="entry name" value="MFS general substrate transporter like domains"/>
    <property type="match status" value="1"/>
</dbReference>
<dbReference type="InterPro" id="IPR039309">
    <property type="entry name" value="BT1"/>
</dbReference>
<dbReference type="InterPro" id="IPR036259">
    <property type="entry name" value="MFS_trans_sf"/>
</dbReference>
<dbReference type="PANTHER" id="PTHR31585">
    <property type="entry name" value="FOLATE-BIOPTERIN TRANSPORTER 1, CHLOROPLASTIC"/>
    <property type="match status" value="1"/>
</dbReference>
<dbReference type="PANTHER" id="PTHR31585:SF6">
    <property type="entry name" value="FOLATE-BIOPTERIN TRANSPORTER 2-RELATED"/>
    <property type="match status" value="1"/>
</dbReference>
<dbReference type="Pfam" id="PF03092">
    <property type="entry name" value="BT1"/>
    <property type="match status" value="1"/>
</dbReference>
<dbReference type="SUPFAM" id="SSF103473">
    <property type="entry name" value="MFS general substrate transporter"/>
    <property type="match status" value="1"/>
</dbReference>
<accession>F4KIL8</accession>
<accession>F4KIM0</accession>
<accession>Q67YF0</accession>
<sequence>MAREEQNIENRGSVHVVERESNLRSVVCGPVRWLKMLASKLHWSYVFAVVSNCGINQGFGYSLGHVATDYYMKDVQKVQPSQYQALSAITRISWIIFKPLFGILTDVLPIFGFHRRPYFILAGVIGVVSLLFISLQSNLHLYLALFWMTISSAAMAIADVTIDACTTYNSNKHPSLASDMQSLCSLSYSIGELLGFFMSGILVHLVGSKGVFGLLTFTFALVSVVGVLFSEPRVHGFSFKQNFTNAMKAMWRTIKCSDVWQPSLYMFITRALGLDIKEGLFYWFTDSKDGPLFAQETVGFILSIGSIGSILGVLLYNLRLKDHPFRKLFLWTQLLFALSGMFDLILVLRLNLKFGLPDYLFIVVDGIVSKMIIRLTWMVIFVLNTKLCPHGIEGTFFALLMSIDNAGLMTSSWLGGKMLHVLKVTRTEFGNLWLAVLVRNVMRLLPICFLFLVPQGDQNTFKLPAEIMGEDSEEEGTRNLELASLVDYVDRS</sequence>
<organism>
    <name type="scientific">Arabidopsis thaliana</name>
    <name type="common">Mouse-ear cress</name>
    <dbReference type="NCBI Taxonomy" id="3702"/>
    <lineage>
        <taxon>Eukaryota</taxon>
        <taxon>Viridiplantae</taxon>
        <taxon>Streptophyta</taxon>
        <taxon>Embryophyta</taxon>
        <taxon>Tracheophyta</taxon>
        <taxon>Spermatophyta</taxon>
        <taxon>Magnoliopsida</taxon>
        <taxon>eudicotyledons</taxon>
        <taxon>Gunneridae</taxon>
        <taxon>Pentapetalae</taxon>
        <taxon>rosids</taxon>
        <taxon>malvids</taxon>
        <taxon>Brassicales</taxon>
        <taxon>Brassicaceae</taxon>
        <taxon>Camelineae</taxon>
        <taxon>Arabidopsis</taxon>
    </lineage>
</organism>
<gene>
    <name type="ordered locus">At5g25040</name>
    <name type="ORF">T11H3.50</name>
</gene>
<reference key="1">
    <citation type="journal article" date="2000" name="Nature">
        <title>Sequence and analysis of chromosome 5 of the plant Arabidopsis thaliana.</title>
        <authorList>
            <person name="Tabata S."/>
            <person name="Kaneko T."/>
            <person name="Nakamura Y."/>
            <person name="Kotani H."/>
            <person name="Kato T."/>
            <person name="Asamizu E."/>
            <person name="Miyajima N."/>
            <person name="Sasamoto S."/>
            <person name="Kimura T."/>
            <person name="Hosouchi T."/>
            <person name="Kawashima K."/>
            <person name="Kohara M."/>
            <person name="Matsumoto M."/>
            <person name="Matsuno A."/>
            <person name="Muraki A."/>
            <person name="Nakayama S."/>
            <person name="Nakazaki N."/>
            <person name="Naruo K."/>
            <person name="Okumura S."/>
            <person name="Shinpo S."/>
            <person name="Takeuchi C."/>
            <person name="Wada T."/>
            <person name="Watanabe A."/>
            <person name="Yamada M."/>
            <person name="Yasuda M."/>
            <person name="Sato S."/>
            <person name="de la Bastide M."/>
            <person name="Huang E."/>
            <person name="Spiegel L."/>
            <person name="Gnoj L."/>
            <person name="O'Shaughnessy A."/>
            <person name="Preston R."/>
            <person name="Habermann K."/>
            <person name="Murray J."/>
            <person name="Johnson D."/>
            <person name="Rohlfing T."/>
            <person name="Nelson J."/>
            <person name="Stoneking T."/>
            <person name="Pepin K."/>
            <person name="Spieth J."/>
            <person name="Sekhon M."/>
            <person name="Armstrong J."/>
            <person name="Becker M."/>
            <person name="Belter E."/>
            <person name="Cordum H."/>
            <person name="Cordes M."/>
            <person name="Courtney L."/>
            <person name="Courtney W."/>
            <person name="Dante M."/>
            <person name="Du H."/>
            <person name="Edwards J."/>
            <person name="Fryman J."/>
            <person name="Haakensen B."/>
            <person name="Lamar E."/>
            <person name="Latreille P."/>
            <person name="Leonard S."/>
            <person name="Meyer R."/>
            <person name="Mulvaney E."/>
            <person name="Ozersky P."/>
            <person name="Riley A."/>
            <person name="Strowmatt C."/>
            <person name="Wagner-McPherson C."/>
            <person name="Wollam A."/>
            <person name="Yoakum M."/>
            <person name="Bell M."/>
            <person name="Dedhia N."/>
            <person name="Parnell L."/>
            <person name="Shah R."/>
            <person name="Rodriguez M."/>
            <person name="Hoon See L."/>
            <person name="Vil D."/>
            <person name="Baker J."/>
            <person name="Kirchoff K."/>
            <person name="Toth K."/>
            <person name="King L."/>
            <person name="Bahret A."/>
            <person name="Miller B."/>
            <person name="Marra M.A."/>
            <person name="Martienssen R."/>
            <person name="McCombie W.R."/>
            <person name="Wilson R.K."/>
            <person name="Murphy G."/>
            <person name="Bancroft I."/>
            <person name="Volckaert G."/>
            <person name="Wambutt R."/>
            <person name="Duesterhoeft A."/>
            <person name="Stiekema W."/>
            <person name="Pohl T."/>
            <person name="Entian K.-D."/>
            <person name="Terryn N."/>
            <person name="Hartley N."/>
            <person name="Bent E."/>
            <person name="Johnson S."/>
            <person name="Langham S.-A."/>
            <person name="McCullagh B."/>
            <person name="Robben J."/>
            <person name="Grymonprez B."/>
            <person name="Zimmermann W."/>
            <person name="Ramsperger U."/>
            <person name="Wedler H."/>
            <person name="Balke K."/>
            <person name="Wedler E."/>
            <person name="Peters S."/>
            <person name="van Staveren M."/>
            <person name="Dirkse W."/>
            <person name="Mooijman P."/>
            <person name="Klein Lankhorst R."/>
            <person name="Weitzenegger T."/>
            <person name="Bothe G."/>
            <person name="Rose M."/>
            <person name="Hauf J."/>
            <person name="Berneiser S."/>
            <person name="Hempel S."/>
            <person name="Feldpausch M."/>
            <person name="Lamberth S."/>
            <person name="Villarroel R."/>
            <person name="Gielen J."/>
            <person name="Ardiles W."/>
            <person name="Bents O."/>
            <person name="Lemcke K."/>
            <person name="Kolesov G."/>
            <person name="Mayer K.F.X."/>
            <person name="Rudd S."/>
            <person name="Schoof H."/>
            <person name="Schueller C."/>
            <person name="Zaccaria P."/>
            <person name="Mewes H.-W."/>
            <person name="Bevan M."/>
            <person name="Fransz P.F."/>
        </authorList>
    </citation>
    <scope>NUCLEOTIDE SEQUENCE [LARGE SCALE GENOMIC DNA]</scope>
    <source>
        <strain>cv. Columbia</strain>
    </source>
</reference>
<reference key="2">
    <citation type="journal article" date="2017" name="Plant J.">
        <title>Araport11: a complete reannotation of the Arabidopsis thaliana reference genome.</title>
        <authorList>
            <person name="Cheng C.Y."/>
            <person name="Krishnakumar V."/>
            <person name="Chan A.P."/>
            <person name="Thibaud-Nissen F."/>
            <person name="Schobel S."/>
            <person name="Town C.D."/>
        </authorList>
    </citation>
    <scope>GENOME REANNOTATION</scope>
    <source>
        <strain>cv. Columbia</strain>
    </source>
</reference>
<reference key="3">
    <citation type="submission" date="2004-09" db="EMBL/GenBank/DDBJ databases">
        <title>Large-scale analysis of RIKEN Arabidopsis full-length (RAFL) cDNAs.</title>
        <authorList>
            <person name="Totoki Y."/>
            <person name="Seki M."/>
            <person name="Ishida J."/>
            <person name="Nakajima M."/>
            <person name="Enju A."/>
            <person name="Kamiya A."/>
            <person name="Narusaka M."/>
            <person name="Shin-i T."/>
            <person name="Nakagawa M."/>
            <person name="Sakamoto N."/>
            <person name="Oishi K."/>
            <person name="Kohara Y."/>
            <person name="Kobayashi M."/>
            <person name="Toyoda A."/>
            <person name="Sakaki Y."/>
            <person name="Sakurai T."/>
            <person name="Iida K."/>
            <person name="Akiyama K."/>
            <person name="Satou M."/>
            <person name="Toyoda T."/>
            <person name="Konagaya A."/>
            <person name="Carninci P."/>
            <person name="Kawai J."/>
            <person name="Hayashizaki Y."/>
            <person name="Shinozaki K."/>
        </authorList>
    </citation>
    <scope>NUCLEOTIDE SEQUENCE [LARGE SCALE MRNA] (ISOFORM 2)</scope>
    <source>
        <strain>cv. Columbia</strain>
    </source>
</reference>
<reference key="4">
    <citation type="journal article" date="2005" name="J. Biol. Chem.">
        <title>Higher plant plastids and cyanobacteria have folate carriers related to those of trypanosomatids.</title>
        <authorList>
            <person name="Klaus S.M."/>
            <person name="Kunji E.R."/>
            <person name="Bozzo G.G."/>
            <person name="Noiriel A."/>
            <person name="de la Garza R.D."/>
            <person name="Basset G.J."/>
            <person name="Ravanel S."/>
            <person name="Rebeille F."/>
            <person name="Gregory J.F. III"/>
            <person name="Hanson A.D."/>
        </authorList>
    </citation>
    <scope>GENE FAMILY</scope>
</reference>
<proteinExistence type="evidence at transcript level"/>